<gene>
    <name evidence="1" type="primary">ndk</name>
    <name type="ordered locus">APP7_0356</name>
</gene>
<reference key="1">
    <citation type="submission" date="2008-06" db="EMBL/GenBank/DDBJ databases">
        <title>Genome and proteome analysis of A. pleuropneumoniae serotype 7.</title>
        <authorList>
            <person name="Linke B."/>
            <person name="Buettner F."/>
            <person name="Martinez-Arias R."/>
            <person name="Goesmann A."/>
            <person name="Baltes N."/>
            <person name="Tegetmeyer H."/>
            <person name="Singh M."/>
            <person name="Gerlach G.F."/>
        </authorList>
    </citation>
    <scope>NUCLEOTIDE SEQUENCE [LARGE SCALE GENOMIC DNA]</scope>
    <source>
        <strain>AP76</strain>
    </source>
</reference>
<comment type="function">
    <text evidence="1">Major role in the synthesis of nucleoside triphosphates other than ATP. The ATP gamma phosphate is transferred to the NDP beta phosphate via a ping-pong mechanism, using a phosphorylated active-site intermediate.</text>
</comment>
<comment type="catalytic activity">
    <reaction evidence="1">
        <text>a 2'-deoxyribonucleoside 5'-diphosphate + ATP = a 2'-deoxyribonucleoside 5'-triphosphate + ADP</text>
        <dbReference type="Rhea" id="RHEA:44640"/>
        <dbReference type="ChEBI" id="CHEBI:30616"/>
        <dbReference type="ChEBI" id="CHEBI:61560"/>
        <dbReference type="ChEBI" id="CHEBI:73316"/>
        <dbReference type="ChEBI" id="CHEBI:456216"/>
        <dbReference type="EC" id="2.7.4.6"/>
    </reaction>
</comment>
<comment type="catalytic activity">
    <reaction evidence="1">
        <text>a ribonucleoside 5'-diphosphate + ATP = a ribonucleoside 5'-triphosphate + ADP</text>
        <dbReference type="Rhea" id="RHEA:18113"/>
        <dbReference type="ChEBI" id="CHEBI:30616"/>
        <dbReference type="ChEBI" id="CHEBI:57930"/>
        <dbReference type="ChEBI" id="CHEBI:61557"/>
        <dbReference type="ChEBI" id="CHEBI:456216"/>
        <dbReference type="EC" id="2.7.4.6"/>
    </reaction>
</comment>
<comment type="cofactor">
    <cofactor evidence="1">
        <name>Mg(2+)</name>
        <dbReference type="ChEBI" id="CHEBI:18420"/>
    </cofactor>
</comment>
<comment type="subunit">
    <text evidence="1">Homotetramer.</text>
</comment>
<comment type="subcellular location">
    <subcellularLocation>
        <location evidence="1">Cytoplasm</location>
    </subcellularLocation>
</comment>
<comment type="similarity">
    <text evidence="1">Belongs to the NDK family.</text>
</comment>
<name>NDK_ACTP7</name>
<dbReference type="EC" id="2.7.4.6" evidence="1"/>
<dbReference type="EMBL" id="CP001091">
    <property type="protein sequence ID" value="ACE61008.1"/>
    <property type="molecule type" value="Genomic_DNA"/>
</dbReference>
<dbReference type="RefSeq" id="WP_005596335.1">
    <property type="nucleotide sequence ID" value="NC_010939.1"/>
</dbReference>
<dbReference type="SMR" id="B3H0J6"/>
<dbReference type="GeneID" id="48598516"/>
<dbReference type="KEGG" id="apa:APP7_0356"/>
<dbReference type="HOGENOM" id="CLU_060216_8_1_6"/>
<dbReference type="Proteomes" id="UP000001226">
    <property type="component" value="Chromosome"/>
</dbReference>
<dbReference type="GO" id="GO:0005737">
    <property type="term" value="C:cytoplasm"/>
    <property type="evidence" value="ECO:0007669"/>
    <property type="project" value="UniProtKB-SubCell"/>
</dbReference>
<dbReference type="GO" id="GO:0005524">
    <property type="term" value="F:ATP binding"/>
    <property type="evidence" value="ECO:0007669"/>
    <property type="project" value="UniProtKB-UniRule"/>
</dbReference>
<dbReference type="GO" id="GO:0046872">
    <property type="term" value="F:metal ion binding"/>
    <property type="evidence" value="ECO:0007669"/>
    <property type="project" value="UniProtKB-KW"/>
</dbReference>
<dbReference type="GO" id="GO:0004550">
    <property type="term" value="F:nucleoside diphosphate kinase activity"/>
    <property type="evidence" value="ECO:0007669"/>
    <property type="project" value="UniProtKB-UniRule"/>
</dbReference>
<dbReference type="GO" id="GO:0006241">
    <property type="term" value="P:CTP biosynthetic process"/>
    <property type="evidence" value="ECO:0007669"/>
    <property type="project" value="UniProtKB-UniRule"/>
</dbReference>
<dbReference type="GO" id="GO:0006183">
    <property type="term" value="P:GTP biosynthetic process"/>
    <property type="evidence" value="ECO:0007669"/>
    <property type="project" value="UniProtKB-UniRule"/>
</dbReference>
<dbReference type="GO" id="GO:0006228">
    <property type="term" value="P:UTP biosynthetic process"/>
    <property type="evidence" value="ECO:0007669"/>
    <property type="project" value="UniProtKB-UniRule"/>
</dbReference>
<dbReference type="CDD" id="cd04413">
    <property type="entry name" value="NDPk_I"/>
    <property type="match status" value="1"/>
</dbReference>
<dbReference type="FunFam" id="3.30.70.141:FF:000003">
    <property type="entry name" value="Nucleoside diphosphate kinase"/>
    <property type="match status" value="1"/>
</dbReference>
<dbReference type="Gene3D" id="3.30.70.141">
    <property type="entry name" value="Nucleoside diphosphate kinase-like domain"/>
    <property type="match status" value="1"/>
</dbReference>
<dbReference type="HAMAP" id="MF_00451">
    <property type="entry name" value="NDP_kinase"/>
    <property type="match status" value="1"/>
</dbReference>
<dbReference type="InterPro" id="IPR034907">
    <property type="entry name" value="NDK-like_dom"/>
</dbReference>
<dbReference type="InterPro" id="IPR036850">
    <property type="entry name" value="NDK-like_dom_sf"/>
</dbReference>
<dbReference type="InterPro" id="IPR001564">
    <property type="entry name" value="Nucleoside_diP_kinase"/>
</dbReference>
<dbReference type="InterPro" id="IPR023005">
    <property type="entry name" value="Nucleoside_diP_kinase_AS"/>
</dbReference>
<dbReference type="NCBIfam" id="NF001908">
    <property type="entry name" value="PRK00668.1"/>
    <property type="match status" value="1"/>
</dbReference>
<dbReference type="PANTHER" id="PTHR46161">
    <property type="entry name" value="NUCLEOSIDE DIPHOSPHATE KINASE"/>
    <property type="match status" value="1"/>
</dbReference>
<dbReference type="PANTHER" id="PTHR46161:SF3">
    <property type="entry name" value="NUCLEOSIDE DIPHOSPHATE KINASE DDB_G0292928-RELATED"/>
    <property type="match status" value="1"/>
</dbReference>
<dbReference type="Pfam" id="PF00334">
    <property type="entry name" value="NDK"/>
    <property type="match status" value="1"/>
</dbReference>
<dbReference type="PRINTS" id="PR01243">
    <property type="entry name" value="NUCDPKINASE"/>
</dbReference>
<dbReference type="SMART" id="SM00562">
    <property type="entry name" value="NDK"/>
    <property type="match status" value="1"/>
</dbReference>
<dbReference type="SUPFAM" id="SSF54919">
    <property type="entry name" value="Nucleoside diphosphate kinase, NDK"/>
    <property type="match status" value="1"/>
</dbReference>
<dbReference type="PROSITE" id="PS00469">
    <property type="entry name" value="NDPK"/>
    <property type="match status" value="1"/>
</dbReference>
<dbReference type="PROSITE" id="PS51374">
    <property type="entry name" value="NDPK_LIKE"/>
    <property type="match status" value="1"/>
</dbReference>
<keyword id="KW-0067">ATP-binding</keyword>
<keyword id="KW-0963">Cytoplasm</keyword>
<keyword id="KW-0418">Kinase</keyword>
<keyword id="KW-0460">Magnesium</keyword>
<keyword id="KW-0479">Metal-binding</keyword>
<keyword id="KW-0546">Nucleotide metabolism</keyword>
<keyword id="KW-0547">Nucleotide-binding</keyword>
<keyword id="KW-0597">Phosphoprotein</keyword>
<keyword id="KW-0808">Transferase</keyword>
<evidence type="ECO:0000255" key="1">
    <source>
        <dbReference type="HAMAP-Rule" id="MF_00451"/>
    </source>
</evidence>
<proteinExistence type="inferred from homology"/>
<accession>B3H0J6</accession>
<sequence length="138" mass="15359">MIQQTLCLIKPDATQRNLIGKILSHLEEAGLTIKALKKVQLNQEQAEGFYAEHQGKEFFAPLVEFMISAPIVAVVLEGENAISHYRELMGATNPEQRKAGTIRALYAISGRENSVHGSDSEQSAKREIAYFFTPNEIL</sequence>
<feature type="chain" id="PRO_1000192251" description="Nucleoside diphosphate kinase">
    <location>
        <begin position="1"/>
        <end position="138"/>
    </location>
</feature>
<feature type="active site" description="Pros-phosphohistidine intermediate" evidence="1">
    <location>
        <position position="116"/>
    </location>
</feature>
<feature type="binding site" evidence="1">
    <location>
        <position position="10"/>
    </location>
    <ligand>
        <name>ATP</name>
        <dbReference type="ChEBI" id="CHEBI:30616"/>
    </ligand>
</feature>
<feature type="binding site" evidence="1">
    <location>
        <position position="58"/>
    </location>
    <ligand>
        <name>ATP</name>
        <dbReference type="ChEBI" id="CHEBI:30616"/>
    </ligand>
</feature>
<feature type="binding site" evidence="1">
    <location>
        <position position="86"/>
    </location>
    <ligand>
        <name>ATP</name>
        <dbReference type="ChEBI" id="CHEBI:30616"/>
    </ligand>
</feature>
<feature type="binding site" evidence="1">
    <location>
        <position position="92"/>
    </location>
    <ligand>
        <name>ATP</name>
        <dbReference type="ChEBI" id="CHEBI:30616"/>
    </ligand>
</feature>
<feature type="binding site" evidence="1">
    <location>
        <position position="103"/>
    </location>
    <ligand>
        <name>ATP</name>
        <dbReference type="ChEBI" id="CHEBI:30616"/>
    </ligand>
</feature>
<feature type="binding site" evidence="1">
    <location>
        <position position="113"/>
    </location>
    <ligand>
        <name>ATP</name>
        <dbReference type="ChEBI" id="CHEBI:30616"/>
    </ligand>
</feature>
<protein>
    <recommendedName>
        <fullName evidence="1">Nucleoside diphosphate kinase</fullName>
        <shortName evidence="1">NDK</shortName>
        <shortName evidence="1">NDP kinase</shortName>
        <ecNumber evidence="1">2.7.4.6</ecNumber>
    </recommendedName>
    <alternativeName>
        <fullName evidence="1">Nucleoside-2-P kinase</fullName>
    </alternativeName>
</protein>
<organism>
    <name type="scientific">Actinobacillus pleuropneumoniae serotype 7 (strain AP76)</name>
    <dbReference type="NCBI Taxonomy" id="537457"/>
    <lineage>
        <taxon>Bacteria</taxon>
        <taxon>Pseudomonadati</taxon>
        <taxon>Pseudomonadota</taxon>
        <taxon>Gammaproteobacteria</taxon>
        <taxon>Pasteurellales</taxon>
        <taxon>Pasteurellaceae</taxon>
        <taxon>Actinobacillus</taxon>
    </lineage>
</organism>